<feature type="chain" id="PRO_1000144612" description="Large ribosomal subunit protein uL23">
    <location>
        <begin position="1"/>
        <end position="93"/>
    </location>
</feature>
<organism>
    <name type="scientific">Sulfurovum sp. (strain NBC37-1)</name>
    <dbReference type="NCBI Taxonomy" id="387093"/>
    <lineage>
        <taxon>Bacteria</taxon>
        <taxon>Pseudomonadati</taxon>
        <taxon>Campylobacterota</taxon>
        <taxon>Epsilonproteobacteria</taxon>
        <taxon>Campylobacterales</taxon>
        <taxon>Sulfurovaceae</taxon>
        <taxon>Sulfurovum</taxon>
    </lineage>
</organism>
<protein>
    <recommendedName>
        <fullName evidence="1">Large ribosomal subunit protein uL23</fullName>
    </recommendedName>
    <alternativeName>
        <fullName evidence="2">50S ribosomal protein L23</fullName>
    </alternativeName>
</protein>
<evidence type="ECO:0000255" key="1">
    <source>
        <dbReference type="HAMAP-Rule" id="MF_01369"/>
    </source>
</evidence>
<evidence type="ECO:0000305" key="2"/>
<proteinExistence type="inferred from homology"/>
<reference key="1">
    <citation type="journal article" date="2007" name="Proc. Natl. Acad. Sci. U.S.A.">
        <title>Deep-sea vent epsilon-proteobacterial genomes provide insights into emergence of pathogens.</title>
        <authorList>
            <person name="Nakagawa S."/>
            <person name="Takaki Y."/>
            <person name="Shimamura S."/>
            <person name="Reysenbach A.-L."/>
            <person name="Takai K."/>
            <person name="Horikoshi K."/>
        </authorList>
    </citation>
    <scope>NUCLEOTIDE SEQUENCE [LARGE SCALE GENOMIC DNA]</scope>
    <source>
        <strain>NBC37-1</strain>
    </source>
</reference>
<keyword id="KW-0687">Ribonucleoprotein</keyword>
<keyword id="KW-0689">Ribosomal protein</keyword>
<keyword id="KW-0694">RNA-binding</keyword>
<keyword id="KW-0699">rRNA-binding</keyword>
<dbReference type="EMBL" id="AP009179">
    <property type="protein sequence ID" value="BAF73259.1"/>
    <property type="molecule type" value="Genomic_DNA"/>
</dbReference>
<dbReference type="RefSeq" id="WP_012084098.1">
    <property type="nucleotide sequence ID" value="NC_009663.1"/>
</dbReference>
<dbReference type="SMR" id="A6QCQ0"/>
<dbReference type="STRING" id="387093.SUN_2323"/>
<dbReference type="KEGG" id="sun:SUN_2323"/>
<dbReference type="eggNOG" id="COG0089">
    <property type="taxonomic scope" value="Bacteria"/>
</dbReference>
<dbReference type="HOGENOM" id="CLU_037562_3_1_7"/>
<dbReference type="OrthoDB" id="5339807at2"/>
<dbReference type="Proteomes" id="UP000006378">
    <property type="component" value="Chromosome"/>
</dbReference>
<dbReference type="GO" id="GO:1990904">
    <property type="term" value="C:ribonucleoprotein complex"/>
    <property type="evidence" value="ECO:0007669"/>
    <property type="project" value="UniProtKB-KW"/>
</dbReference>
<dbReference type="GO" id="GO:0005840">
    <property type="term" value="C:ribosome"/>
    <property type="evidence" value="ECO:0007669"/>
    <property type="project" value="UniProtKB-KW"/>
</dbReference>
<dbReference type="GO" id="GO:0019843">
    <property type="term" value="F:rRNA binding"/>
    <property type="evidence" value="ECO:0007669"/>
    <property type="project" value="UniProtKB-UniRule"/>
</dbReference>
<dbReference type="GO" id="GO:0003735">
    <property type="term" value="F:structural constituent of ribosome"/>
    <property type="evidence" value="ECO:0007669"/>
    <property type="project" value="InterPro"/>
</dbReference>
<dbReference type="GO" id="GO:0006412">
    <property type="term" value="P:translation"/>
    <property type="evidence" value="ECO:0007669"/>
    <property type="project" value="UniProtKB-UniRule"/>
</dbReference>
<dbReference type="Gene3D" id="3.30.70.330">
    <property type="match status" value="1"/>
</dbReference>
<dbReference type="HAMAP" id="MF_01369_B">
    <property type="entry name" value="Ribosomal_uL23_B"/>
    <property type="match status" value="1"/>
</dbReference>
<dbReference type="InterPro" id="IPR012677">
    <property type="entry name" value="Nucleotide-bd_a/b_plait_sf"/>
</dbReference>
<dbReference type="InterPro" id="IPR013025">
    <property type="entry name" value="Ribosomal_uL23-like"/>
</dbReference>
<dbReference type="InterPro" id="IPR012678">
    <property type="entry name" value="Ribosomal_uL23/eL15/eS24_sf"/>
</dbReference>
<dbReference type="NCBIfam" id="NF004362">
    <property type="entry name" value="PRK05738.2-2"/>
    <property type="match status" value="1"/>
</dbReference>
<dbReference type="Pfam" id="PF00276">
    <property type="entry name" value="Ribosomal_L23"/>
    <property type="match status" value="1"/>
</dbReference>
<dbReference type="SUPFAM" id="SSF54189">
    <property type="entry name" value="Ribosomal proteins S24e, L23 and L15e"/>
    <property type="match status" value="1"/>
</dbReference>
<gene>
    <name evidence="1" type="primary">rplW</name>
    <name type="ordered locus">SUN_2323</name>
</gene>
<sequence length="93" mass="10591">MADITDIKSIMYTEKSLALQEEGVIVVQTTPRMTKNGLKEVFKEFFGITPLRVNSMRVNGKVKRFKGIEGKRPDLKKFYVKLPEDAKIESLAV</sequence>
<accession>A6QCQ0</accession>
<name>RL23_SULNB</name>
<comment type="function">
    <text evidence="1">One of the early assembly proteins it binds 23S rRNA. One of the proteins that surrounds the polypeptide exit tunnel on the outside of the ribosome. Forms the main docking site for trigger factor binding to the ribosome.</text>
</comment>
<comment type="subunit">
    <text evidence="1">Part of the 50S ribosomal subunit. Contacts protein L29, and trigger factor when it is bound to the ribosome.</text>
</comment>
<comment type="similarity">
    <text evidence="1">Belongs to the universal ribosomal protein uL23 family.</text>
</comment>